<accession>Q2YNR6</accession>
<evidence type="ECO:0000255" key="1">
    <source>
        <dbReference type="HAMAP-Rule" id="MF_00316"/>
    </source>
</evidence>
<dbReference type="EC" id="2.7.7.77" evidence="1"/>
<dbReference type="EMBL" id="AM040264">
    <property type="protein sequence ID" value="CAJ10928.1"/>
    <property type="molecule type" value="Genomic_DNA"/>
</dbReference>
<dbReference type="RefSeq" id="WP_002964077.1">
    <property type="nucleotide sequence ID" value="NZ_KN046823.1"/>
</dbReference>
<dbReference type="SMR" id="Q2YNR6"/>
<dbReference type="STRING" id="359391.BAB1_0972"/>
<dbReference type="KEGG" id="bmf:BAB1_0972"/>
<dbReference type="HOGENOM" id="CLU_055597_5_0_5"/>
<dbReference type="Proteomes" id="UP000002719">
    <property type="component" value="Chromosome I"/>
</dbReference>
<dbReference type="GO" id="GO:0005737">
    <property type="term" value="C:cytoplasm"/>
    <property type="evidence" value="ECO:0007669"/>
    <property type="project" value="UniProtKB-SubCell"/>
</dbReference>
<dbReference type="GO" id="GO:0005525">
    <property type="term" value="F:GTP binding"/>
    <property type="evidence" value="ECO:0007669"/>
    <property type="project" value="UniProtKB-UniRule"/>
</dbReference>
<dbReference type="GO" id="GO:0046872">
    <property type="term" value="F:metal ion binding"/>
    <property type="evidence" value="ECO:0007669"/>
    <property type="project" value="UniProtKB-KW"/>
</dbReference>
<dbReference type="GO" id="GO:0061603">
    <property type="term" value="F:molybdenum cofactor guanylyltransferase activity"/>
    <property type="evidence" value="ECO:0007669"/>
    <property type="project" value="UniProtKB-EC"/>
</dbReference>
<dbReference type="GO" id="GO:1902758">
    <property type="term" value="P:bis(molybdopterin guanine dinucleotide)molybdenum biosynthetic process"/>
    <property type="evidence" value="ECO:0007669"/>
    <property type="project" value="TreeGrafter"/>
</dbReference>
<dbReference type="CDD" id="cd02503">
    <property type="entry name" value="MobA"/>
    <property type="match status" value="1"/>
</dbReference>
<dbReference type="Gene3D" id="3.90.550.10">
    <property type="entry name" value="Spore Coat Polysaccharide Biosynthesis Protein SpsA, Chain A"/>
    <property type="match status" value="1"/>
</dbReference>
<dbReference type="HAMAP" id="MF_00316">
    <property type="entry name" value="MobA"/>
    <property type="match status" value="1"/>
</dbReference>
<dbReference type="InterPro" id="IPR025877">
    <property type="entry name" value="MobA-like_NTP_Trfase"/>
</dbReference>
<dbReference type="InterPro" id="IPR013482">
    <property type="entry name" value="Molybde_CF_guanTrfase"/>
</dbReference>
<dbReference type="InterPro" id="IPR029044">
    <property type="entry name" value="Nucleotide-diphossugar_trans"/>
</dbReference>
<dbReference type="PANTHER" id="PTHR19136">
    <property type="entry name" value="MOLYBDENUM COFACTOR GUANYLYLTRANSFERASE"/>
    <property type="match status" value="1"/>
</dbReference>
<dbReference type="PANTHER" id="PTHR19136:SF81">
    <property type="entry name" value="MOLYBDENUM COFACTOR GUANYLYLTRANSFERASE"/>
    <property type="match status" value="1"/>
</dbReference>
<dbReference type="Pfam" id="PF12804">
    <property type="entry name" value="NTP_transf_3"/>
    <property type="match status" value="1"/>
</dbReference>
<dbReference type="SUPFAM" id="SSF53448">
    <property type="entry name" value="Nucleotide-diphospho-sugar transferases"/>
    <property type="match status" value="1"/>
</dbReference>
<feature type="chain" id="PRO_1000019105" description="Molybdenum cofactor guanylyltransferase">
    <location>
        <begin position="1"/>
        <end position="221"/>
    </location>
</feature>
<feature type="binding site" evidence="1">
    <location>
        <begin position="18"/>
        <end position="20"/>
    </location>
    <ligand>
        <name>GTP</name>
        <dbReference type="ChEBI" id="CHEBI:37565"/>
    </ligand>
</feature>
<feature type="binding site" evidence="1">
    <location>
        <position position="35"/>
    </location>
    <ligand>
        <name>GTP</name>
        <dbReference type="ChEBI" id="CHEBI:37565"/>
    </ligand>
</feature>
<feature type="binding site" evidence="1">
    <location>
        <position position="63"/>
    </location>
    <ligand>
        <name>GTP</name>
        <dbReference type="ChEBI" id="CHEBI:37565"/>
    </ligand>
</feature>
<feature type="binding site" evidence="1">
    <location>
        <position position="81"/>
    </location>
    <ligand>
        <name>GTP</name>
        <dbReference type="ChEBI" id="CHEBI:37565"/>
    </ligand>
</feature>
<feature type="binding site" evidence="1">
    <location>
        <position position="112"/>
    </location>
    <ligand>
        <name>GTP</name>
        <dbReference type="ChEBI" id="CHEBI:37565"/>
    </ligand>
</feature>
<feature type="binding site" evidence="1">
    <location>
        <position position="112"/>
    </location>
    <ligand>
        <name>Mg(2+)</name>
        <dbReference type="ChEBI" id="CHEBI:18420"/>
    </ligand>
</feature>
<reference key="1">
    <citation type="journal article" date="2005" name="Infect. Immun.">
        <title>Whole-genome analyses of speciation events in pathogenic Brucellae.</title>
        <authorList>
            <person name="Chain P.S."/>
            <person name="Comerci D.J."/>
            <person name="Tolmasky M.E."/>
            <person name="Larimer F.W."/>
            <person name="Malfatti S.A."/>
            <person name="Vergez L.M."/>
            <person name="Aguero F."/>
            <person name="Land M.L."/>
            <person name="Ugalde R.A."/>
            <person name="Garcia E."/>
        </authorList>
    </citation>
    <scope>NUCLEOTIDE SEQUENCE [LARGE SCALE GENOMIC DNA]</scope>
    <source>
        <strain>2308</strain>
    </source>
</reference>
<keyword id="KW-0963">Cytoplasm</keyword>
<keyword id="KW-0342">GTP-binding</keyword>
<keyword id="KW-0460">Magnesium</keyword>
<keyword id="KW-0479">Metal-binding</keyword>
<keyword id="KW-0501">Molybdenum cofactor biosynthesis</keyword>
<keyword id="KW-0547">Nucleotide-binding</keyword>
<keyword id="KW-1185">Reference proteome</keyword>
<keyword id="KW-0808">Transferase</keyword>
<proteinExistence type="inferred from homology"/>
<name>MOBA_BRUA2</name>
<comment type="function">
    <text evidence="1">Transfers a GMP moiety from GTP to Mo-molybdopterin (Mo-MPT) cofactor (Moco or molybdenum cofactor) to form Mo-molybdopterin guanine dinucleotide (Mo-MGD) cofactor.</text>
</comment>
<comment type="catalytic activity">
    <reaction evidence="1">
        <text>Mo-molybdopterin + GTP + H(+) = Mo-molybdopterin guanine dinucleotide + diphosphate</text>
        <dbReference type="Rhea" id="RHEA:34243"/>
        <dbReference type="ChEBI" id="CHEBI:15378"/>
        <dbReference type="ChEBI" id="CHEBI:33019"/>
        <dbReference type="ChEBI" id="CHEBI:37565"/>
        <dbReference type="ChEBI" id="CHEBI:71302"/>
        <dbReference type="ChEBI" id="CHEBI:71310"/>
        <dbReference type="EC" id="2.7.7.77"/>
    </reaction>
</comment>
<comment type="cofactor">
    <cofactor evidence="1">
        <name>Mg(2+)</name>
        <dbReference type="ChEBI" id="CHEBI:18420"/>
    </cofactor>
</comment>
<comment type="subunit">
    <text evidence="1">Monomer.</text>
</comment>
<comment type="subcellular location">
    <subcellularLocation>
        <location evidence="1">Cytoplasm</location>
    </subcellularLocation>
</comment>
<comment type="domain">
    <text evidence="1">The N-terminal domain determines nucleotide recognition and specific binding, while the C-terminal domain determines the specific binding to the target protein.</text>
</comment>
<comment type="similarity">
    <text evidence="1">Belongs to the MobA family.</text>
</comment>
<gene>
    <name evidence="1" type="primary">mobA</name>
    <name type="ordered locus">BAB1_0972</name>
</gene>
<organism>
    <name type="scientific">Brucella abortus (strain 2308)</name>
    <dbReference type="NCBI Taxonomy" id="359391"/>
    <lineage>
        <taxon>Bacteria</taxon>
        <taxon>Pseudomonadati</taxon>
        <taxon>Pseudomonadota</taxon>
        <taxon>Alphaproteobacteria</taxon>
        <taxon>Hyphomicrobiales</taxon>
        <taxon>Brucellaceae</taxon>
        <taxon>Brucella/Ochrobactrum group</taxon>
        <taxon>Brucella</taxon>
    </lineage>
</organism>
<sequence length="221" mass="23735">MRAGQPKITGAKITGAIIAGGQSSRMQAGGVSGDKFLQPLGSAPVIAHVIARLQPQVDTLFINSKGDLSRFAAFGLPAVKDIAMNHGGPLVGLLTCLAHASPCRLLLTSAADTPFLPCDLASNLIRKQAETGARIILACSNERVHPIVGLWHTDLVPDLEKWLQHAEKASIFWFAKHIGFEVVNIPLAHAPRLAESYDPFFNINLPDDLLKAREINEALQA</sequence>
<protein>
    <recommendedName>
        <fullName evidence="1">Molybdenum cofactor guanylyltransferase</fullName>
        <shortName evidence="1">MoCo guanylyltransferase</shortName>
        <ecNumber evidence="1">2.7.7.77</ecNumber>
    </recommendedName>
    <alternativeName>
        <fullName evidence="1">GTP:molybdopterin guanylyltransferase</fullName>
    </alternativeName>
    <alternativeName>
        <fullName evidence="1">Mo-MPT guanylyltransferase</fullName>
    </alternativeName>
    <alternativeName>
        <fullName evidence="1">Molybdopterin guanylyltransferase</fullName>
    </alternativeName>
    <alternativeName>
        <fullName evidence="1">Molybdopterin-guanine dinucleotide synthase</fullName>
        <shortName evidence="1">MGD synthase</shortName>
    </alternativeName>
</protein>